<organism>
    <name type="scientific">Staphylococcus epidermidis (strain ATCC 12228 / FDA PCI 1200)</name>
    <dbReference type="NCBI Taxonomy" id="176280"/>
    <lineage>
        <taxon>Bacteria</taxon>
        <taxon>Bacillati</taxon>
        <taxon>Bacillota</taxon>
        <taxon>Bacilli</taxon>
        <taxon>Bacillales</taxon>
        <taxon>Staphylococcaceae</taxon>
        <taxon>Staphylococcus</taxon>
    </lineage>
</organism>
<gene>
    <name evidence="1" type="primary">pgk</name>
    <name type="ordered locus">SE_0558</name>
</gene>
<proteinExistence type="inferred from homology"/>
<evidence type="ECO:0000255" key="1">
    <source>
        <dbReference type="HAMAP-Rule" id="MF_00145"/>
    </source>
</evidence>
<reference key="1">
    <citation type="journal article" date="2003" name="Mol. Microbiol.">
        <title>Genome-based analysis of virulence genes in a non-biofilm-forming Staphylococcus epidermidis strain (ATCC 12228).</title>
        <authorList>
            <person name="Zhang Y.-Q."/>
            <person name="Ren S.-X."/>
            <person name="Li H.-L."/>
            <person name="Wang Y.-X."/>
            <person name="Fu G."/>
            <person name="Yang J."/>
            <person name="Qin Z.-Q."/>
            <person name="Miao Y.-G."/>
            <person name="Wang W.-Y."/>
            <person name="Chen R.-S."/>
            <person name="Shen Y."/>
            <person name="Chen Z."/>
            <person name="Yuan Z.-H."/>
            <person name="Zhao G.-P."/>
            <person name="Qu D."/>
            <person name="Danchin A."/>
            <person name="Wen Y.-M."/>
        </authorList>
    </citation>
    <scope>NUCLEOTIDE SEQUENCE [LARGE SCALE GENOMIC DNA]</scope>
    <source>
        <strain>ATCC 12228 / FDA PCI 1200</strain>
    </source>
</reference>
<keyword id="KW-0067">ATP-binding</keyword>
<keyword id="KW-0963">Cytoplasm</keyword>
<keyword id="KW-0324">Glycolysis</keyword>
<keyword id="KW-0418">Kinase</keyword>
<keyword id="KW-0547">Nucleotide-binding</keyword>
<keyword id="KW-0808">Transferase</keyword>
<dbReference type="EC" id="2.7.2.3" evidence="1"/>
<dbReference type="EMBL" id="AE015929">
    <property type="protein sequence ID" value="AAO04155.1"/>
    <property type="molecule type" value="Genomic_DNA"/>
</dbReference>
<dbReference type="RefSeq" id="NP_764113.1">
    <property type="nucleotide sequence ID" value="NC_004461.1"/>
</dbReference>
<dbReference type="RefSeq" id="WP_001829665.1">
    <property type="nucleotide sequence ID" value="NZ_WBME01000030.1"/>
</dbReference>
<dbReference type="SMR" id="Q8CTD6"/>
<dbReference type="KEGG" id="sep:SE_0558"/>
<dbReference type="PATRIC" id="fig|176280.10.peg.529"/>
<dbReference type="eggNOG" id="COG0126">
    <property type="taxonomic scope" value="Bacteria"/>
</dbReference>
<dbReference type="HOGENOM" id="CLU_025427_0_2_9"/>
<dbReference type="OrthoDB" id="9808460at2"/>
<dbReference type="UniPathway" id="UPA00109">
    <property type="reaction ID" value="UER00185"/>
</dbReference>
<dbReference type="Proteomes" id="UP000001411">
    <property type="component" value="Chromosome"/>
</dbReference>
<dbReference type="GO" id="GO:0005829">
    <property type="term" value="C:cytosol"/>
    <property type="evidence" value="ECO:0007669"/>
    <property type="project" value="TreeGrafter"/>
</dbReference>
<dbReference type="GO" id="GO:0043531">
    <property type="term" value="F:ADP binding"/>
    <property type="evidence" value="ECO:0007669"/>
    <property type="project" value="TreeGrafter"/>
</dbReference>
<dbReference type="GO" id="GO:0005524">
    <property type="term" value="F:ATP binding"/>
    <property type="evidence" value="ECO:0007669"/>
    <property type="project" value="UniProtKB-KW"/>
</dbReference>
<dbReference type="GO" id="GO:0004618">
    <property type="term" value="F:phosphoglycerate kinase activity"/>
    <property type="evidence" value="ECO:0007669"/>
    <property type="project" value="UniProtKB-UniRule"/>
</dbReference>
<dbReference type="GO" id="GO:0006094">
    <property type="term" value="P:gluconeogenesis"/>
    <property type="evidence" value="ECO:0007669"/>
    <property type="project" value="TreeGrafter"/>
</dbReference>
<dbReference type="GO" id="GO:0006096">
    <property type="term" value="P:glycolytic process"/>
    <property type="evidence" value="ECO:0007669"/>
    <property type="project" value="UniProtKB-UniRule"/>
</dbReference>
<dbReference type="CDD" id="cd00318">
    <property type="entry name" value="Phosphoglycerate_kinase"/>
    <property type="match status" value="1"/>
</dbReference>
<dbReference type="FunFam" id="3.40.50.1260:FF:000001">
    <property type="entry name" value="Phosphoglycerate kinase"/>
    <property type="match status" value="1"/>
</dbReference>
<dbReference type="FunFam" id="3.40.50.1260:FF:000008">
    <property type="entry name" value="Phosphoglycerate kinase"/>
    <property type="match status" value="1"/>
</dbReference>
<dbReference type="Gene3D" id="3.40.50.1260">
    <property type="entry name" value="Phosphoglycerate kinase, N-terminal domain"/>
    <property type="match status" value="2"/>
</dbReference>
<dbReference type="HAMAP" id="MF_00145">
    <property type="entry name" value="Phosphoglyc_kinase"/>
    <property type="match status" value="1"/>
</dbReference>
<dbReference type="InterPro" id="IPR001576">
    <property type="entry name" value="Phosphoglycerate_kinase"/>
</dbReference>
<dbReference type="InterPro" id="IPR015824">
    <property type="entry name" value="Phosphoglycerate_kinase_N"/>
</dbReference>
<dbReference type="InterPro" id="IPR036043">
    <property type="entry name" value="Phosphoglycerate_kinase_sf"/>
</dbReference>
<dbReference type="PANTHER" id="PTHR11406">
    <property type="entry name" value="PHOSPHOGLYCERATE KINASE"/>
    <property type="match status" value="1"/>
</dbReference>
<dbReference type="PANTHER" id="PTHR11406:SF23">
    <property type="entry name" value="PHOSPHOGLYCERATE KINASE 1, CHLOROPLASTIC-RELATED"/>
    <property type="match status" value="1"/>
</dbReference>
<dbReference type="Pfam" id="PF00162">
    <property type="entry name" value="PGK"/>
    <property type="match status" value="1"/>
</dbReference>
<dbReference type="PIRSF" id="PIRSF000724">
    <property type="entry name" value="Pgk"/>
    <property type="match status" value="1"/>
</dbReference>
<dbReference type="PRINTS" id="PR00477">
    <property type="entry name" value="PHGLYCKINASE"/>
</dbReference>
<dbReference type="SUPFAM" id="SSF53748">
    <property type="entry name" value="Phosphoglycerate kinase"/>
    <property type="match status" value="1"/>
</dbReference>
<name>PGK_STAES</name>
<protein>
    <recommendedName>
        <fullName evidence="1">Phosphoglycerate kinase</fullName>
        <ecNumber evidence="1">2.7.2.3</ecNumber>
    </recommendedName>
</protein>
<accession>Q8CTD6</accession>
<feature type="chain" id="PRO_0000146008" description="Phosphoglycerate kinase">
    <location>
        <begin position="1"/>
        <end position="396"/>
    </location>
</feature>
<feature type="binding site" evidence="1">
    <location>
        <begin position="21"/>
        <end position="23"/>
    </location>
    <ligand>
        <name>substrate</name>
    </ligand>
</feature>
<feature type="binding site" evidence="1">
    <location>
        <position position="36"/>
    </location>
    <ligand>
        <name>substrate</name>
    </ligand>
</feature>
<feature type="binding site" evidence="1">
    <location>
        <begin position="59"/>
        <end position="62"/>
    </location>
    <ligand>
        <name>substrate</name>
    </ligand>
</feature>
<feature type="binding site" evidence="1">
    <location>
        <position position="119"/>
    </location>
    <ligand>
        <name>substrate</name>
    </ligand>
</feature>
<feature type="binding site" evidence="1">
    <location>
        <position position="156"/>
    </location>
    <ligand>
        <name>substrate</name>
    </ligand>
</feature>
<feature type="binding site" evidence="1">
    <location>
        <position position="206"/>
    </location>
    <ligand>
        <name>ATP</name>
        <dbReference type="ChEBI" id="CHEBI:30616"/>
    </ligand>
</feature>
<feature type="binding site" evidence="1">
    <location>
        <position position="325"/>
    </location>
    <ligand>
        <name>ATP</name>
        <dbReference type="ChEBI" id="CHEBI:30616"/>
    </ligand>
</feature>
<feature type="binding site" evidence="1">
    <location>
        <begin position="352"/>
        <end position="355"/>
    </location>
    <ligand>
        <name>ATP</name>
        <dbReference type="ChEBI" id="CHEBI:30616"/>
    </ligand>
</feature>
<sequence>MAKKIVSDLDLKGKVVLERADFNVPIKDGEITNDNRIVQALPTIEYIIEQGGKLVLFSHLGKVKEESDKEGLSLKPVAENLSKKLGKEVIFVPETRGEKLETAIENLNEGDVLLVENTRFEDLDGKKESKNDPELGKYWASLGDVFVNDAFGTAHREHASNVGISTHLETAAGYLMEKEIKFIGGVVNDPQKPVVAILGGAKVSDKINVIKNLVNIADKILIGGGMAYTFIKAQGKEIGLSLLEEDKIDFAKDLLENNGDQIVLPVDCKIAKEFSNDAKITEVSINEIPSDQEAMDIGPKTVELFNKELQGAHTVVWNGPMGVFEFSNFAKGTIGVCESIAKLEDATTIIGGGDSAAAAISLGFEDDFTHISTGGGASLEYLEGKELPGIKAINDK</sequence>
<comment type="catalytic activity">
    <reaction evidence="1">
        <text>(2R)-3-phosphoglycerate + ATP = (2R)-3-phospho-glyceroyl phosphate + ADP</text>
        <dbReference type="Rhea" id="RHEA:14801"/>
        <dbReference type="ChEBI" id="CHEBI:30616"/>
        <dbReference type="ChEBI" id="CHEBI:57604"/>
        <dbReference type="ChEBI" id="CHEBI:58272"/>
        <dbReference type="ChEBI" id="CHEBI:456216"/>
        <dbReference type="EC" id="2.7.2.3"/>
    </reaction>
</comment>
<comment type="pathway">
    <text evidence="1">Carbohydrate degradation; glycolysis; pyruvate from D-glyceraldehyde 3-phosphate: step 2/5.</text>
</comment>
<comment type="subunit">
    <text evidence="1">Monomer.</text>
</comment>
<comment type="subcellular location">
    <subcellularLocation>
        <location evidence="1">Cytoplasm</location>
    </subcellularLocation>
</comment>
<comment type="similarity">
    <text evidence="1">Belongs to the phosphoglycerate kinase family.</text>
</comment>